<protein>
    <recommendedName>
        <fullName evidence="1">Large ribosomal subunit protein uL13</fullName>
    </recommendedName>
    <alternativeName>
        <fullName evidence="2">50S ribosomal protein L13</fullName>
    </alternativeName>
</protein>
<reference key="1">
    <citation type="journal article" date="2006" name="J. Bacteriol.">
        <title>Chromosome rearrangement and diversification of Francisella tularensis revealed by the type B (OSU18) genome sequence.</title>
        <authorList>
            <person name="Petrosino J.F."/>
            <person name="Xiang Q."/>
            <person name="Karpathy S.E."/>
            <person name="Jiang H."/>
            <person name="Yerrapragada S."/>
            <person name="Liu Y."/>
            <person name="Gioia J."/>
            <person name="Hemphill L."/>
            <person name="Gonzalez A."/>
            <person name="Raghavan T.M."/>
            <person name="Uzman A."/>
            <person name="Fox G.E."/>
            <person name="Highlander S."/>
            <person name="Reichard M."/>
            <person name="Morton R.J."/>
            <person name="Clinkenbeard K.D."/>
            <person name="Weinstock G.M."/>
        </authorList>
    </citation>
    <scope>NUCLEOTIDE SEQUENCE [LARGE SCALE GENOMIC DNA]</scope>
    <source>
        <strain>OSU18</strain>
    </source>
</reference>
<comment type="function">
    <text evidence="1">This protein is one of the early assembly proteins of the 50S ribosomal subunit, although it is not seen to bind rRNA by itself. It is important during the early stages of 50S assembly.</text>
</comment>
<comment type="subunit">
    <text evidence="1">Part of the 50S ribosomal subunit.</text>
</comment>
<comment type="similarity">
    <text evidence="1">Belongs to the universal ribosomal protein uL13 family.</text>
</comment>
<keyword id="KW-0687">Ribonucleoprotein</keyword>
<keyword id="KW-0689">Ribosomal protein</keyword>
<name>RL13_FRATO</name>
<organism>
    <name type="scientific">Francisella tularensis subsp. holarctica (strain OSU18)</name>
    <dbReference type="NCBI Taxonomy" id="393011"/>
    <lineage>
        <taxon>Bacteria</taxon>
        <taxon>Pseudomonadati</taxon>
        <taxon>Pseudomonadota</taxon>
        <taxon>Gammaproteobacteria</taxon>
        <taxon>Thiotrichales</taxon>
        <taxon>Francisellaceae</taxon>
        <taxon>Francisella</taxon>
    </lineage>
</organism>
<dbReference type="EMBL" id="CP000437">
    <property type="protein sequence ID" value="ABI83026.1"/>
    <property type="molecule type" value="Genomic_DNA"/>
</dbReference>
<dbReference type="RefSeq" id="WP_003016252.1">
    <property type="nucleotide sequence ID" value="NC_017463.1"/>
</dbReference>
<dbReference type="SMR" id="Q0BLK8"/>
<dbReference type="GeneID" id="75264980"/>
<dbReference type="KEGG" id="fth:FTH_1163"/>
<dbReference type="GO" id="GO:0022625">
    <property type="term" value="C:cytosolic large ribosomal subunit"/>
    <property type="evidence" value="ECO:0007669"/>
    <property type="project" value="TreeGrafter"/>
</dbReference>
<dbReference type="GO" id="GO:0003729">
    <property type="term" value="F:mRNA binding"/>
    <property type="evidence" value="ECO:0007669"/>
    <property type="project" value="TreeGrafter"/>
</dbReference>
<dbReference type="GO" id="GO:0003735">
    <property type="term" value="F:structural constituent of ribosome"/>
    <property type="evidence" value="ECO:0007669"/>
    <property type="project" value="InterPro"/>
</dbReference>
<dbReference type="GO" id="GO:0017148">
    <property type="term" value="P:negative regulation of translation"/>
    <property type="evidence" value="ECO:0007669"/>
    <property type="project" value="TreeGrafter"/>
</dbReference>
<dbReference type="GO" id="GO:0006412">
    <property type="term" value="P:translation"/>
    <property type="evidence" value="ECO:0007669"/>
    <property type="project" value="UniProtKB-UniRule"/>
</dbReference>
<dbReference type="CDD" id="cd00392">
    <property type="entry name" value="Ribosomal_L13"/>
    <property type="match status" value="1"/>
</dbReference>
<dbReference type="FunFam" id="3.90.1180.10:FF:000001">
    <property type="entry name" value="50S ribosomal protein L13"/>
    <property type="match status" value="1"/>
</dbReference>
<dbReference type="Gene3D" id="3.90.1180.10">
    <property type="entry name" value="Ribosomal protein L13"/>
    <property type="match status" value="1"/>
</dbReference>
<dbReference type="HAMAP" id="MF_01366">
    <property type="entry name" value="Ribosomal_uL13"/>
    <property type="match status" value="1"/>
</dbReference>
<dbReference type="InterPro" id="IPR005822">
    <property type="entry name" value="Ribosomal_uL13"/>
</dbReference>
<dbReference type="InterPro" id="IPR005823">
    <property type="entry name" value="Ribosomal_uL13_bac-type"/>
</dbReference>
<dbReference type="InterPro" id="IPR023563">
    <property type="entry name" value="Ribosomal_uL13_CS"/>
</dbReference>
<dbReference type="InterPro" id="IPR036899">
    <property type="entry name" value="Ribosomal_uL13_sf"/>
</dbReference>
<dbReference type="NCBIfam" id="TIGR01066">
    <property type="entry name" value="rplM_bact"/>
    <property type="match status" value="1"/>
</dbReference>
<dbReference type="PANTHER" id="PTHR11545:SF2">
    <property type="entry name" value="LARGE RIBOSOMAL SUBUNIT PROTEIN UL13M"/>
    <property type="match status" value="1"/>
</dbReference>
<dbReference type="PANTHER" id="PTHR11545">
    <property type="entry name" value="RIBOSOMAL PROTEIN L13"/>
    <property type="match status" value="1"/>
</dbReference>
<dbReference type="Pfam" id="PF00572">
    <property type="entry name" value="Ribosomal_L13"/>
    <property type="match status" value="1"/>
</dbReference>
<dbReference type="PIRSF" id="PIRSF002181">
    <property type="entry name" value="Ribosomal_L13"/>
    <property type="match status" value="1"/>
</dbReference>
<dbReference type="SUPFAM" id="SSF52161">
    <property type="entry name" value="Ribosomal protein L13"/>
    <property type="match status" value="1"/>
</dbReference>
<dbReference type="PROSITE" id="PS00783">
    <property type="entry name" value="RIBOSOMAL_L13"/>
    <property type="match status" value="1"/>
</dbReference>
<evidence type="ECO:0000255" key="1">
    <source>
        <dbReference type="HAMAP-Rule" id="MF_01366"/>
    </source>
</evidence>
<evidence type="ECO:0000305" key="2"/>
<sequence length="142" mass="15938">MKTFTAKPSNIKREWLLIDATDKTLGRLATEVAMILRGKNKPEYTPHMDTGDYVVIVNAEKVAVTGNKRKAKTYYHHTGYIGGIKSVSFEKLIATHPERAIEKAVRGMLPRTPLGRTMFKKLKVYAGEAHPHTAQQPKAHNI</sequence>
<accession>Q0BLK8</accession>
<feature type="chain" id="PRO_1000055384" description="Large ribosomal subunit protein uL13">
    <location>
        <begin position="1"/>
        <end position="142"/>
    </location>
</feature>
<proteinExistence type="inferred from homology"/>
<gene>
    <name evidence="1" type="primary">rplM</name>
    <name type="ordered locus">FTH_1163</name>
</gene>